<accession>A9GFL5</accession>
<comment type="function">
    <text evidence="1">Catalyzes the thiamine diphosphate-dependent decarboxylation of 2-oxoglutarate and the subsequent addition of the resulting succinic semialdehyde-thiamine pyrophosphate anion to isochorismate to yield 2-succinyl-5-enolpyruvyl-6-hydroxy-3-cyclohexene-1-carboxylate (SEPHCHC).</text>
</comment>
<comment type="catalytic activity">
    <reaction evidence="1">
        <text>isochorismate + 2-oxoglutarate + H(+) = 5-enolpyruvoyl-6-hydroxy-2-succinyl-cyclohex-3-ene-1-carboxylate + CO2</text>
        <dbReference type="Rhea" id="RHEA:25593"/>
        <dbReference type="ChEBI" id="CHEBI:15378"/>
        <dbReference type="ChEBI" id="CHEBI:16526"/>
        <dbReference type="ChEBI" id="CHEBI:16810"/>
        <dbReference type="ChEBI" id="CHEBI:29780"/>
        <dbReference type="ChEBI" id="CHEBI:58818"/>
        <dbReference type="EC" id="2.2.1.9"/>
    </reaction>
</comment>
<comment type="cofactor">
    <cofactor evidence="1">
        <name>Mg(2+)</name>
        <dbReference type="ChEBI" id="CHEBI:18420"/>
    </cofactor>
    <cofactor evidence="1">
        <name>Mn(2+)</name>
        <dbReference type="ChEBI" id="CHEBI:29035"/>
    </cofactor>
</comment>
<comment type="cofactor">
    <cofactor evidence="1">
        <name>thiamine diphosphate</name>
        <dbReference type="ChEBI" id="CHEBI:58937"/>
    </cofactor>
    <text evidence="1">Binds 1 thiamine pyrophosphate per subunit.</text>
</comment>
<comment type="pathway">
    <text evidence="1">Quinol/quinone metabolism; 1,4-dihydroxy-2-naphthoate biosynthesis; 1,4-dihydroxy-2-naphthoate from chorismate: step 2/7.</text>
</comment>
<comment type="pathway">
    <text evidence="1">Quinol/quinone metabolism; menaquinone biosynthesis.</text>
</comment>
<comment type="subunit">
    <text evidence="1">Homodimer.</text>
</comment>
<comment type="similarity">
    <text evidence="1">Belongs to the TPP enzyme family. MenD subfamily.</text>
</comment>
<comment type="sequence caution" evidence="2">
    <conflict type="erroneous initiation">
        <sequence resource="EMBL-CDS" id="CAN93171"/>
    </conflict>
</comment>
<sequence length="614" mass="63497">MGGSNLHSAWAQLFVRALAQAGVRDLVLCPGSRSTPLAIAAMESEEVRCHSVVDERAAAFFALGQARVTGRPSVFVCTSGTAGAHALPAIIEAHQSFTPLIAITADRPWELADAAAAQTIDQTKLFGDHVRHFAELGLPDPSPLALRAVTRIAAQAVTRALSPTPGAVHINARFRKPLEPVDATGPEPWQAEWEALMRRAGTRVVSARAGVDGRAIEELAARCARAERGLIVCGPAESREDDARARRAVLALSRATGFPVLAEGTSQICFGGLTEGVVMPASFDSFLRAPEFRAANAPDLILELGAPPTSAGYATYIAEHASARRVVVSSHGWNDPTSAAAALVMGEPVEVCEALAARLGGAALSLGRGRRDWAATFARAGEIAAGHAARACAGDELTEGAIARMVASACPAGSLLAIGNSMPVRDLDTYCPPSARALRVLHQRGASGIDGLVSAAAGARVAAAAPVTLLLGDLSLLHDLTGLLLAAKATGDGRAPLVIVVVQNDGGRIFEHLPIARRGAALLERCFTMPQHLDFAPAAAMFGLAYERAGTAGELARALAAGYQRAGATLIEAVVPPHDGAARVARLWSDVRRDVAALGSAPAADGAAADLQTP</sequence>
<name>MEND_SORC5</name>
<feature type="chain" id="PRO_0000341848" description="2-succinyl-5-enolpyruvyl-6-hydroxy-3-cyclohexene-1-carboxylate synthase">
    <location>
        <begin position="1"/>
        <end position="614"/>
    </location>
</feature>
<gene>
    <name evidence="1" type="primary">menD</name>
    <name type="ordered locus">sce3012</name>
</gene>
<evidence type="ECO:0000255" key="1">
    <source>
        <dbReference type="HAMAP-Rule" id="MF_01659"/>
    </source>
</evidence>
<evidence type="ECO:0000305" key="2"/>
<organism>
    <name type="scientific">Sorangium cellulosum (strain So ce56)</name>
    <name type="common">Polyangium cellulosum (strain So ce56)</name>
    <dbReference type="NCBI Taxonomy" id="448385"/>
    <lineage>
        <taxon>Bacteria</taxon>
        <taxon>Pseudomonadati</taxon>
        <taxon>Myxococcota</taxon>
        <taxon>Polyangia</taxon>
        <taxon>Polyangiales</taxon>
        <taxon>Polyangiaceae</taxon>
        <taxon>Sorangium</taxon>
    </lineage>
</organism>
<protein>
    <recommendedName>
        <fullName evidence="1">2-succinyl-5-enolpyruvyl-6-hydroxy-3-cyclohexene-1-carboxylate synthase</fullName>
        <shortName evidence="1">SEPHCHC synthase</shortName>
        <ecNumber evidence="1">2.2.1.9</ecNumber>
    </recommendedName>
    <alternativeName>
        <fullName evidence="1">Menaquinone biosynthesis protein MenD</fullName>
    </alternativeName>
</protein>
<keyword id="KW-0460">Magnesium</keyword>
<keyword id="KW-0464">Manganese</keyword>
<keyword id="KW-0474">Menaquinone biosynthesis</keyword>
<keyword id="KW-0479">Metal-binding</keyword>
<keyword id="KW-1185">Reference proteome</keyword>
<keyword id="KW-0786">Thiamine pyrophosphate</keyword>
<keyword id="KW-0808">Transferase</keyword>
<dbReference type="EC" id="2.2.1.9" evidence="1"/>
<dbReference type="EMBL" id="AM746676">
    <property type="protein sequence ID" value="CAN93171.1"/>
    <property type="status" value="ALT_INIT"/>
    <property type="molecule type" value="Genomic_DNA"/>
</dbReference>
<dbReference type="RefSeq" id="WP_044964987.1">
    <property type="nucleotide sequence ID" value="NC_010162.1"/>
</dbReference>
<dbReference type="SMR" id="A9GFL5"/>
<dbReference type="STRING" id="448385.sce3012"/>
<dbReference type="KEGG" id="scl:sce3012"/>
<dbReference type="eggNOG" id="COG1165">
    <property type="taxonomic scope" value="Bacteria"/>
</dbReference>
<dbReference type="HOGENOM" id="CLU_006051_3_0_7"/>
<dbReference type="OrthoDB" id="9791859at2"/>
<dbReference type="BioCyc" id="SCEL448385:SCE_RS15460-MONOMER"/>
<dbReference type="UniPathway" id="UPA00079"/>
<dbReference type="UniPathway" id="UPA01057">
    <property type="reaction ID" value="UER00164"/>
</dbReference>
<dbReference type="Proteomes" id="UP000002139">
    <property type="component" value="Chromosome"/>
</dbReference>
<dbReference type="GO" id="GO:0070204">
    <property type="term" value="F:2-succinyl-5-enolpyruvyl-6-hydroxy-3-cyclohexene-1-carboxylic-acid synthase activity"/>
    <property type="evidence" value="ECO:0007669"/>
    <property type="project" value="UniProtKB-UniRule"/>
</dbReference>
<dbReference type="GO" id="GO:0000287">
    <property type="term" value="F:magnesium ion binding"/>
    <property type="evidence" value="ECO:0007669"/>
    <property type="project" value="UniProtKB-UniRule"/>
</dbReference>
<dbReference type="GO" id="GO:0030145">
    <property type="term" value="F:manganese ion binding"/>
    <property type="evidence" value="ECO:0007669"/>
    <property type="project" value="UniProtKB-UniRule"/>
</dbReference>
<dbReference type="GO" id="GO:0030976">
    <property type="term" value="F:thiamine pyrophosphate binding"/>
    <property type="evidence" value="ECO:0007669"/>
    <property type="project" value="UniProtKB-UniRule"/>
</dbReference>
<dbReference type="GO" id="GO:0009234">
    <property type="term" value="P:menaquinone biosynthetic process"/>
    <property type="evidence" value="ECO:0007669"/>
    <property type="project" value="UniProtKB-UniRule"/>
</dbReference>
<dbReference type="CDD" id="cd07037">
    <property type="entry name" value="TPP_PYR_MenD"/>
    <property type="match status" value="1"/>
</dbReference>
<dbReference type="Gene3D" id="3.40.50.970">
    <property type="match status" value="2"/>
</dbReference>
<dbReference type="Gene3D" id="3.40.50.1220">
    <property type="entry name" value="TPP-binding domain"/>
    <property type="match status" value="1"/>
</dbReference>
<dbReference type="HAMAP" id="MF_01659">
    <property type="entry name" value="MenD"/>
    <property type="match status" value="1"/>
</dbReference>
<dbReference type="InterPro" id="IPR029035">
    <property type="entry name" value="DHS-like_NAD/FAD-binding_dom"/>
</dbReference>
<dbReference type="InterPro" id="IPR004433">
    <property type="entry name" value="MenaQ_synth_MenD"/>
</dbReference>
<dbReference type="InterPro" id="IPR029061">
    <property type="entry name" value="THDP-binding"/>
</dbReference>
<dbReference type="InterPro" id="IPR012001">
    <property type="entry name" value="Thiamin_PyroP_enz_TPP-bd_dom"/>
</dbReference>
<dbReference type="InterPro" id="IPR011766">
    <property type="entry name" value="TPP_enzyme_TPP-bd"/>
</dbReference>
<dbReference type="NCBIfam" id="TIGR00173">
    <property type="entry name" value="menD"/>
    <property type="match status" value="1"/>
</dbReference>
<dbReference type="PANTHER" id="PTHR42916">
    <property type="entry name" value="2-SUCCINYL-5-ENOLPYRUVYL-6-HYDROXY-3-CYCLOHEXENE-1-CARBOXYLATE SYNTHASE"/>
    <property type="match status" value="1"/>
</dbReference>
<dbReference type="PANTHER" id="PTHR42916:SF1">
    <property type="entry name" value="PROTEIN PHYLLO, CHLOROPLASTIC"/>
    <property type="match status" value="1"/>
</dbReference>
<dbReference type="Pfam" id="PF02775">
    <property type="entry name" value="TPP_enzyme_C"/>
    <property type="match status" value="1"/>
</dbReference>
<dbReference type="Pfam" id="PF02776">
    <property type="entry name" value="TPP_enzyme_N"/>
    <property type="match status" value="1"/>
</dbReference>
<dbReference type="PIRSF" id="PIRSF004983">
    <property type="entry name" value="MenD"/>
    <property type="match status" value="1"/>
</dbReference>
<dbReference type="SUPFAM" id="SSF52467">
    <property type="entry name" value="DHS-like NAD/FAD-binding domain"/>
    <property type="match status" value="1"/>
</dbReference>
<dbReference type="SUPFAM" id="SSF52518">
    <property type="entry name" value="Thiamin diphosphate-binding fold (THDP-binding)"/>
    <property type="match status" value="2"/>
</dbReference>
<reference key="1">
    <citation type="journal article" date="2007" name="Nat. Biotechnol.">
        <title>Complete genome sequence of the myxobacterium Sorangium cellulosum.</title>
        <authorList>
            <person name="Schneiker S."/>
            <person name="Perlova O."/>
            <person name="Kaiser O."/>
            <person name="Gerth K."/>
            <person name="Alici A."/>
            <person name="Altmeyer M.O."/>
            <person name="Bartels D."/>
            <person name="Bekel T."/>
            <person name="Beyer S."/>
            <person name="Bode E."/>
            <person name="Bode H.B."/>
            <person name="Bolten C.J."/>
            <person name="Choudhuri J.V."/>
            <person name="Doss S."/>
            <person name="Elnakady Y.A."/>
            <person name="Frank B."/>
            <person name="Gaigalat L."/>
            <person name="Goesmann A."/>
            <person name="Groeger C."/>
            <person name="Gross F."/>
            <person name="Jelsbak L."/>
            <person name="Jelsbak L."/>
            <person name="Kalinowski J."/>
            <person name="Kegler C."/>
            <person name="Knauber T."/>
            <person name="Konietzny S."/>
            <person name="Kopp M."/>
            <person name="Krause L."/>
            <person name="Krug D."/>
            <person name="Linke B."/>
            <person name="Mahmud T."/>
            <person name="Martinez-Arias R."/>
            <person name="McHardy A.C."/>
            <person name="Merai M."/>
            <person name="Meyer F."/>
            <person name="Mormann S."/>
            <person name="Munoz-Dorado J."/>
            <person name="Perez J."/>
            <person name="Pradella S."/>
            <person name="Rachid S."/>
            <person name="Raddatz G."/>
            <person name="Rosenau F."/>
            <person name="Rueckert C."/>
            <person name="Sasse F."/>
            <person name="Scharfe M."/>
            <person name="Schuster S.C."/>
            <person name="Suen G."/>
            <person name="Treuner-Lange A."/>
            <person name="Velicer G.J."/>
            <person name="Vorholter F.-J."/>
            <person name="Weissman K.J."/>
            <person name="Welch R.D."/>
            <person name="Wenzel S.C."/>
            <person name="Whitworth D.E."/>
            <person name="Wilhelm S."/>
            <person name="Wittmann C."/>
            <person name="Bloecker H."/>
            <person name="Puehler A."/>
            <person name="Mueller R."/>
        </authorList>
    </citation>
    <scope>NUCLEOTIDE SEQUENCE [LARGE SCALE GENOMIC DNA]</scope>
    <source>
        <strain>So ce56</strain>
    </source>
</reference>
<proteinExistence type="inferred from homology"/>